<proteinExistence type="inferred from homology"/>
<name>NAGZ_YERE8</name>
<evidence type="ECO:0000255" key="1">
    <source>
        <dbReference type="HAMAP-Rule" id="MF_00364"/>
    </source>
</evidence>
<accession>A1JME4</accession>
<gene>
    <name evidence="1" type="primary">nagZ</name>
    <name type="ordered locus">YE1705</name>
</gene>
<reference key="1">
    <citation type="journal article" date="2006" name="PLoS Genet.">
        <title>The complete genome sequence and comparative genome analysis of the high pathogenicity Yersinia enterocolitica strain 8081.</title>
        <authorList>
            <person name="Thomson N.R."/>
            <person name="Howard S."/>
            <person name="Wren B.W."/>
            <person name="Holden M.T.G."/>
            <person name="Crossman L."/>
            <person name="Challis G.L."/>
            <person name="Churcher C."/>
            <person name="Mungall K."/>
            <person name="Brooks K."/>
            <person name="Chillingworth T."/>
            <person name="Feltwell T."/>
            <person name="Abdellah Z."/>
            <person name="Hauser H."/>
            <person name="Jagels K."/>
            <person name="Maddison M."/>
            <person name="Moule S."/>
            <person name="Sanders M."/>
            <person name="Whitehead S."/>
            <person name="Quail M.A."/>
            <person name="Dougan G."/>
            <person name="Parkhill J."/>
            <person name="Prentice M.B."/>
        </authorList>
    </citation>
    <scope>NUCLEOTIDE SEQUENCE [LARGE SCALE GENOMIC DNA]</scope>
    <source>
        <strain>NCTC 13174 / 8081</strain>
    </source>
</reference>
<feature type="chain" id="PRO_1000005665" description="Beta-hexosaminidase">
    <location>
        <begin position="1"/>
        <end position="341"/>
    </location>
</feature>
<feature type="active site" description="Proton donor/acceptor" evidence="1">
    <location>
        <position position="176"/>
    </location>
</feature>
<feature type="active site" description="Nucleophile" evidence="1">
    <location>
        <position position="248"/>
    </location>
</feature>
<feature type="binding site" evidence="1">
    <location>
        <position position="62"/>
    </location>
    <ligand>
        <name>substrate</name>
    </ligand>
</feature>
<feature type="binding site" evidence="1">
    <location>
        <position position="70"/>
    </location>
    <ligand>
        <name>substrate</name>
    </ligand>
</feature>
<feature type="binding site" evidence="1">
    <location>
        <position position="133"/>
    </location>
    <ligand>
        <name>substrate</name>
    </ligand>
</feature>
<feature type="binding site" evidence="1">
    <location>
        <begin position="163"/>
        <end position="164"/>
    </location>
    <ligand>
        <name>substrate</name>
    </ligand>
</feature>
<feature type="site" description="Important for catalytic activity" evidence="1">
    <location>
        <position position="174"/>
    </location>
</feature>
<comment type="function">
    <text evidence="1">Plays a role in peptidoglycan recycling by cleaving the terminal beta-1,4-linked N-acetylglucosamine (GlcNAc) from peptide-linked peptidoglycan fragments, giving rise to free GlcNAc, anhydro-N-acetylmuramic acid and anhydro-N-acetylmuramic acid-linked peptides.</text>
</comment>
<comment type="catalytic activity">
    <reaction evidence="1">
        <text>Hydrolysis of terminal non-reducing N-acetyl-D-hexosamine residues in N-acetyl-beta-D-hexosaminides.</text>
        <dbReference type="EC" id="3.2.1.52"/>
    </reaction>
</comment>
<comment type="pathway">
    <text evidence="1">Cell wall biogenesis; peptidoglycan recycling.</text>
</comment>
<comment type="subcellular location">
    <subcellularLocation>
        <location evidence="1">Cytoplasm</location>
    </subcellularLocation>
</comment>
<comment type="similarity">
    <text evidence="1">Belongs to the glycosyl hydrolase 3 family. NagZ subfamily.</text>
</comment>
<protein>
    <recommendedName>
        <fullName evidence="1">Beta-hexosaminidase</fullName>
        <ecNumber evidence="1">3.2.1.52</ecNumber>
    </recommendedName>
    <alternativeName>
        <fullName evidence="1">Beta-N-acetylhexosaminidase</fullName>
    </alternativeName>
    <alternativeName>
        <fullName evidence="1">N-acetyl-beta-glucosaminidase</fullName>
    </alternativeName>
</protein>
<dbReference type="EC" id="3.2.1.52" evidence="1"/>
<dbReference type="EMBL" id="AM286415">
    <property type="protein sequence ID" value="CAL11780.1"/>
    <property type="molecule type" value="Genomic_DNA"/>
</dbReference>
<dbReference type="RefSeq" id="WP_011816133.1">
    <property type="nucleotide sequence ID" value="NC_008800.1"/>
</dbReference>
<dbReference type="RefSeq" id="YP_001005991.1">
    <property type="nucleotide sequence ID" value="NC_008800.1"/>
</dbReference>
<dbReference type="SMR" id="A1JME4"/>
<dbReference type="CAZy" id="GH3">
    <property type="family name" value="Glycoside Hydrolase Family 3"/>
</dbReference>
<dbReference type="KEGG" id="yen:YE1705"/>
<dbReference type="PATRIC" id="fig|393305.7.peg.1848"/>
<dbReference type="eggNOG" id="COG1472">
    <property type="taxonomic scope" value="Bacteria"/>
</dbReference>
<dbReference type="HOGENOM" id="CLU_008392_0_0_6"/>
<dbReference type="OrthoDB" id="9786661at2"/>
<dbReference type="UniPathway" id="UPA00544"/>
<dbReference type="Proteomes" id="UP000000642">
    <property type="component" value="Chromosome"/>
</dbReference>
<dbReference type="GO" id="GO:0005737">
    <property type="term" value="C:cytoplasm"/>
    <property type="evidence" value="ECO:0007669"/>
    <property type="project" value="UniProtKB-SubCell"/>
</dbReference>
<dbReference type="GO" id="GO:0004563">
    <property type="term" value="F:beta-N-acetylhexosaminidase activity"/>
    <property type="evidence" value="ECO:0007669"/>
    <property type="project" value="UniProtKB-UniRule"/>
</dbReference>
<dbReference type="GO" id="GO:0005975">
    <property type="term" value="P:carbohydrate metabolic process"/>
    <property type="evidence" value="ECO:0007669"/>
    <property type="project" value="InterPro"/>
</dbReference>
<dbReference type="GO" id="GO:0051301">
    <property type="term" value="P:cell division"/>
    <property type="evidence" value="ECO:0007669"/>
    <property type="project" value="UniProtKB-KW"/>
</dbReference>
<dbReference type="GO" id="GO:0071555">
    <property type="term" value="P:cell wall organization"/>
    <property type="evidence" value="ECO:0007669"/>
    <property type="project" value="UniProtKB-KW"/>
</dbReference>
<dbReference type="GO" id="GO:0009252">
    <property type="term" value="P:peptidoglycan biosynthetic process"/>
    <property type="evidence" value="ECO:0007669"/>
    <property type="project" value="UniProtKB-KW"/>
</dbReference>
<dbReference type="GO" id="GO:0009254">
    <property type="term" value="P:peptidoglycan turnover"/>
    <property type="evidence" value="ECO:0007669"/>
    <property type="project" value="UniProtKB-UniRule"/>
</dbReference>
<dbReference type="GO" id="GO:0008360">
    <property type="term" value="P:regulation of cell shape"/>
    <property type="evidence" value="ECO:0007669"/>
    <property type="project" value="UniProtKB-KW"/>
</dbReference>
<dbReference type="FunFam" id="3.20.20.300:FF:000001">
    <property type="entry name" value="Beta-hexosaminidase"/>
    <property type="match status" value="1"/>
</dbReference>
<dbReference type="Gene3D" id="3.20.20.300">
    <property type="entry name" value="Glycoside hydrolase, family 3, N-terminal domain"/>
    <property type="match status" value="1"/>
</dbReference>
<dbReference type="HAMAP" id="MF_00364">
    <property type="entry name" value="NagZ"/>
    <property type="match status" value="1"/>
</dbReference>
<dbReference type="InterPro" id="IPR022956">
    <property type="entry name" value="Beta_hexosaminidase_bac"/>
</dbReference>
<dbReference type="InterPro" id="IPR019800">
    <property type="entry name" value="Glyco_hydro_3_AS"/>
</dbReference>
<dbReference type="InterPro" id="IPR001764">
    <property type="entry name" value="Glyco_hydro_3_N"/>
</dbReference>
<dbReference type="InterPro" id="IPR036962">
    <property type="entry name" value="Glyco_hydro_3_N_sf"/>
</dbReference>
<dbReference type="InterPro" id="IPR017853">
    <property type="entry name" value="Glycoside_hydrolase_SF"/>
</dbReference>
<dbReference type="InterPro" id="IPR050226">
    <property type="entry name" value="NagZ_Beta-hexosaminidase"/>
</dbReference>
<dbReference type="NCBIfam" id="NF003740">
    <property type="entry name" value="PRK05337.1"/>
    <property type="match status" value="1"/>
</dbReference>
<dbReference type="PANTHER" id="PTHR30480:SF13">
    <property type="entry name" value="BETA-HEXOSAMINIDASE"/>
    <property type="match status" value="1"/>
</dbReference>
<dbReference type="PANTHER" id="PTHR30480">
    <property type="entry name" value="BETA-HEXOSAMINIDASE-RELATED"/>
    <property type="match status" value="1"/>
</dbReference>
<dbReference type="Pfam" id="PF00933">
    <property type="entry name" value="Glyco_hydro_3"/>
    <property type="match status" value="1"/>
</dbReference>
<dbReference type="SUPFAM" id="SSF51445">
    <property type="entry name" value="(Trans)glycosidases"/>
    <property type="match status" value="1"/>
</dbReference>
<dbReference type="PROSITE" id="PS00775">
    <property type="entry name" value="GLYCOSYL_HYDROL_F3"/>
    <property type="match status" value="1"/>
</dbReference>
<sequence>MGPVMLDVASYELDAEEREILKHPLVGGLILFSRNFHDAAQLRELVRQIRAASHERLVVAVDQEGGRVQRFRDGFTRLPEAQSFAAINDAATAAQLAQDAGWLMAAEMISMDIDISFAPVLDIGHVSAAIGERSFHSDPQQALKMAECFIRGMHSAGMKTTGKHFPGHGAVTADSHKETPRDNRPLAEIRTHDMVIFRELIARRLLDAIMPAHVIYTEADARPASGSSYWLQTILRQELGFDGIIFSDDLSMEGAAIMGSYAERGQASLDAGCDMILVCNNRQGAVSVLDNLSPVKADQLACLYHSGQFDRQALMASPRWQQANKALTALSERWDAHKSRG</sequence>
<organism>
    <name type="scientific">Yersinia enterocolitica serotype O:8 / biotype 1B (strain NCTC 13174 / 8081)</name>
    <dbReference type="NCBI Taxonomy" id="393305"/>
    <lineage>
        <taxon>Bacteria</taxon>
        <taxon>Pseudomonadati</taxon>
        <taxon>Pseudomonadota</taxon>
        <taxon>Gammaproteobacteria</taxon>
        <taxon>Enterobacterales</taxon>
        <taxon>Yersiniaceae</taxon>
        <taxon>Yersinia</taxon>
    </lineage>
</organism>
<keyword id="KW-0131">Cell cycle</keyword>
<keyword id="KW-0132">Cell division</keyword>
<keyword id="KW-0133">Cell shape</keyword>
<keyword id="KW-0961">Cell wall biogenesis/degradation</keyword>
<keyword id="KW-0963">Cytoplasm</keyword>
<keyword id="KW-0326">Glycosidase</keyword>
<keyword id="KW-0378">Hydrolase</keyword>
<keyword id="KW-0573">Peptidoglycan synthesis</keyword>